<protein>
    <recommendedName>
        <fullName>Putative glucose ABC transporter permease protein TsgC13</fullName>
    </recommendedName>
</protein>
<geneLocation type="plasmid">
    <name>pHV3</name>
</geneLocation>
<organism>
    <name type="scientific">Haloferax volcanii (strain ATCC 29605 / DSM 3757 / JCM 8879 / NBRC 14742 / NCIMB 2012 / VKM B-1768 / DS2)</name>
    <name type="common">Halobacterium volcanii</name>
    <dbReference type="NCBI Taxonomy" id="309800"/>
    <lineage>
        <taxon>Archaea</taxon>
        <taxon>Methanobacteriati</taxon>
        <taxon>Methanobacteriota</taxon>
        <taxon>Stenosarchaea group</taxon>
        <taxon>Halobacteria</taxon>
        <taxon>Halobacteriales</taxon>
        <taxon>Haloferacaceae</taxon>
        <taxon>Haloferax</taxon>
    </lineage>
</organism>
<proteinExistence type="inferred from homology"/>
<sequence length="329" mass="34876">MSFAAGLLNATVQAATVLLLAGLGELISERAGVLNLGVEGMMLVGALGGFVVTAVTGNYWLGFGVGIACGMALAAVHAFLCISLKSNQVISGVMLTLLGTGLTTFFGSGWVQESITGFPQMTFPIVGRYLVHLPLVGEAFFRSTATDYLALLAVPVVWFFLYRSNLGLEIIAVGEDPEMADTMGVPVFKFRYLAVIIGGGFAGAAGAHLSLAFSQLWVPGMTVGRGWIAVALVVFAQWRPSRMLVGAYLFGLLDALQLRSQSLSLALDPNAPLAGVLNPLVNTLMNPQIMSTYPYLTTIAVLSYAVIRTESVRLAVPSALLQSYNREMD</sequence>
<gene>
    <name type="primary">tsgC13</name>
    <name type="ordered locus">HVO_B0314</name>
</gene>
<dbReference type="EMBL" id="CP001953">
    <property type="protein sequence ID" value="ADE01443.1"/>
    <property type="molecule type" value="Genomic_DNA"/>
</dbReference>
<dbReference type="PaxDb" id="309800-C498_02095"/>
<dbReference type="EnsemblBacteria" id="ADE01443">
    <property type="protein sequence ID" value="ADE01443"/>
    <property type="gene ID" value="HVO_B0314"/>
</dbReference>
<dbReference type="KEGG" id="hvo:HVO_B0314"/>
<dbReference type="eggNOG" id="arCOG00261">
    <property type="taxonomic scope" value="Archaea"/>
</dbReference>
<dbReference type="HOGENOM" id="CLU_040769_1_1_2"/>
<dbReference type="PRO" id="PR:D4GPW1"/>
<dbReference type="Proteomes" id="UP000008243">
    <property type="component" value="Plasmid pHV3"/>
</dbReference>
<dbReference type="GO" id="GO:0005886">
    <property type="term" value="C:plasma membrane"/>
    <property type="evidence" value="ECO:0007669"/>
    <property type="project" value="UniProtKB-SubCell"/>
</dbReference>
<dbReference type="GO" id="GO:0022857">
    <property type="term" value="F:transmembrane transporter activity"/>
    <property type="evidence" value="ECO:0007669"/>
    <property type="project" value="InterPro"/>
</dbReference>
<dbReference type="CDD" id="cd06580">
    <property type="entry name" value="TM_PBP1_transp_TpRbsC_like"/>
    <property type="match status" value="1"/>
</dbReference>
<dbReference type="InterPro" id="IPR001851">
    <property type="entry name" value="ABC_transp_permease"/>
</dbReference>
<dbReference type="PANTHER" id="PTHR43370:SF2">
    <property type="entry name" value="ABC TRANSPORTER PERMEASE PROTEIN"/>
    <property type="match status" value="1"/>
</dbReference>
<dbReference type="PANTHER" id="PTHR43370">
    <property type="entry name" value="SUGAR ABC TRANSPORTER INTEGRAL MEMBRANE PROTEIN-RELATED"/>
    <property type="match status" value="1"/>
</dbReference>
<dbReference type="Pfam" id="PF02653">
    <property type="entry name" value="BPD_transp_2"/>
    <property type="match status" value="1"/>
</dbReference>
<evidence type="ECO:0000250" key="1"/>
<evidence type="ECO:0000255" key="2"/>
<evidence type="ECO:0000305" key="3"/>
<keyword id="KW-1003">Cell membrane</keyword>
<keyword id="KW-0472">Membrane</keyword>
<keyword id="KW-0614">Plasmid</keyword>
<keyword id="KW-1185">Reference proteome</keyword>
<keyword id="KW-0762">Sugar transport</keyword>
<keyword id="KW-0812">Transmembrane</keyword>
<keyword id="KW-1133">Transmembrane helix</keyword>
<keyword id="KW-0813">Transport</keyword>
<name>TSGCD_HALVD</name>
<reference key="1">
    <citation type="journal article" date="2010" name="PLoS ONE">
        <title>The complete genome sequence of Haloferax volcanii DS2, a model archaeon.</title>
        <authorList>
            <person name="Hartman A.L."/>
            <person name="Norais C."/>
            <person name="Badger J.H."/>
            <person name="Delmas S."/>
            <person name="Haldenby S."/>
            <person name="Madupu R."/>
            <person name="Robinson J."/>
            <person name="Khouri H."/>
            <person name="Ren Q."/>
            <person name="Lowe T.M."/>
            <person name="Maupin-Furlow J."/>
            <person name="Pohlschroder M."/>
            <person name="Daniels C."/>
            <person name="Pfeiffer F."/>
            <person name="Allers T."/>
            <person name="Eisen J.A."/>
        </authorList>
    </citation>
    <scope>NUCLEOTIDE SEQUENCE [LARGE SCALE GENOMIC DNA]</scope>
    <source>
        <strain>ATCC 29605 / DSM 3757 / JCM 8879 / NBRC 14742 / NCIMB 2012 / VKM B-1768 / DS2</strain>
    </source>
</reference>
<comment type="function">
    <text evidence="1 3">Part of an ABC transporter complex involved in glucose import (Potential). Responsible for the translocation of the substrate across the membrane (By similarity).</text>
</comment>
<comment type="subunit">
    <text evidence="3">The complex is composed of two ATP-binding proteins (TsgD13), two transmembrane proteins (TsgB13 and TsgC13) and a solute-binding protein (TsgA13).</text>
</comment>
<comment type="subcellular location">
    <subcellularLocation>
        <location evidence="3">Cell membrane</location>
        <topology evidence="3">Multi-pass membrane protein</topology>
    </subcellularLocation>
</comment>
<comment type="similarity">
    <text evidence="3">Belongs to the binding-protein-dependent transport system permease family.</text>
</comment>
<feature type="chain" id="PRO_0000420946" description="Putative glucose ABC transporter permease protein TsgC13">
    <location>
        <begin position="1"/>
        <end position="329"/>
    </location>
</feature>
<feature type="transmembrane region" description="Helical" evidence="2">
    <location>
        <begin position="3"/>
        <end position="23"/>
    </location>
</feature>
<feature type="transmembrane region" description="Helical" evidence="2">
    <location>
        <begin position="32"/>
        <end position="52"/>
    </location>
</feature>
<feature type="transmembrane region" description="Helical" evidence="2">
    <location>
        <begin position="60"/>
        <end position="80"/>
    </location>
</feature>
<feature type="transmembrane region" description="Helical" evidence="2">
    <location>
        <begin position="89"/>
        <end position="109"/>
    </location>
</feature>
<feature type="transmembrane region" description="Helical" evidence="2">
    <location>
        <begin position="139"/>
        <end position="161"/>
    </location>
</feature>
<feature type="transmembrane region" description="Helical" evidence="2">
    <location>
        <begin position="193"/>
        <end position="213"/>
    </location>
</feature>
<feature type="transmembrane region" description="Helical" evidence="2">
    <location>
        <begin position="216"/>
        <end position="236"/>
    </location>
</feature>
<accession>D4GPW1</accession>